<comment type="function">
    <molecule>Gag-Pol polyprotein</molecule>
    <text evidence="1">Mediates, with Gag polyprotein, the essential events in virion assembly, including binding the plasma membrane, making the protein-protein interactions necessary to create spherical particles, recruiting the viral Env proteins, and packaging the genomic RNA via direct interactions with the RNA packaging sequence (Psi). Gag-Pol polyprotein may regulate its own translation, by the binding genomic RNA in the 5'-UTR. At low concentration, the polyprotein would promote translation, whereas at high concentration, the polyprotein would encapsidate genomic RNA and then shut off translation.</text>
</comment>
<comment type="function">
    <molecule>Matrix protein p17</molecule>
    <text evidence="8">Targets the polyprotein to the plasma membrane via a multipartite membrane-binding signal, that includes its myristoylated N-terminus. Matrix protein is part of the pre-integration complex. Implicated in the release from host cell mediated by Vpu. Binds to RNA.</text>
</comment>
<comment type="function">
    <molecule>Capsid protein p24</molecule>
    <text evidence="5 8">Forms the conical core that encapsulates the genomic RNA-nucleocapsid complex in the virion. Most core are conical, with only 7% tubular. The core is constituted by capsid protein hexamer subunits. The core is disassembled soon after virion entry (By similarity). Host restriction factors such as TRIM5-alpha or TRIMCyp bind retroviral capsids and cause premature capsid disassembly, leading to blocks in reverse transcription. Capsid restriction by TRIM5 is one of the factors which restricts HIV-1 to the human species. Host PIN1 apparently facilitates the virion uncoating. On the other hand, interactions with PDZD8 or CYPA stabilize the capsid.</text>
</comment>
<comment type="function">
    <molecule>Nucleocapsid protein p7</molecule>
    <text evidence="5">Encapsulates and protects viral dimeric unspliced genomic RNA (gRNA). Binds these RNAs through its zinc fingers. Acts as a nucleic acid chaperone which is involved in rearangement of nucleic acid secondary structure during gRNA retrotranscription. Also facilitates template switch leading to recombination. As part of the polyprotein, participates in gRNA dimerization, packaging, tRNA incorporation and virion assembly.</text>
</comment>
<comment type="function">
    <molecule>Protease</molecule>
    <text evidence="5 11">Aspartyl protease that mediates proteolytic cleavages of Gag and Gag-Pol polyproteins during or shortly after the release of the virion from the plasma membrane. Cleavages take place as an ordered, step-wise cascade to yield mature proteins. This process is called maturation. Displays maximal activity during the budding process just prior to particle release from the cell. Also cleaves Nef and Vif, probably concomitantly with viral structural proteins on maturation of virus particles. Hydrolyzes host EIF4GI and PABP1 in order to shut off the capped cellular mRNA translation. The resulting inhibition of cellular protein synthesis serves to ensure maximal viral gene expression and to evade host immune response (By similarity).</text>
</comment>
<comment type="function">
    <molecule>Reverse transcriptase/ribonuclease H</molecule>
    <text evidence="5">Multifunctional enzyme that converts the viral RNA genome into dsDNA in the cytoplasm, shortly after virus entry into the cell. This enzyme displays a DNA polymerase activity that can copy either DNA or RNA templates, and a ribonuclease H (RNase H) activity that cleaves the RNA strand of RNA-DNA heteroduplexes in a partially processive 3' to 5' endonucleasic mode. Conversion of viral genomic RNA into dsDNA requires many steps. A tRNA(3)-Lys binds to the primer-binding site (PBS) situated at the 5'-end of the viral RNA. RT uses the 3' end of the tRNA primer to perform a short round of RNA-dependent minus-strand DNA synthesis. The reading proceeds through the U5 region and ends after the repeated (R) region which is present at both ends of viral RNA. The portion of the RNA-DNA heteroduplex is digested by the RNase H, resulting in a ssDNA product attached to the tRNA primer. This ssDNA/tRNA hybridizes with the identical R region situated at the 3' end of viral RNA. This template exchange, known as minus-strand DNA strong stop transfer, can be either intra- or intermolecular. RT uses the 3' end of this newly synthesized short ssDNA to perform the RNA-dependent minus-strand DNA synthesis of the whole template. RNase H digests the RNA template except for two polypurine tracts (PPTs) situated at the 5'-end and near the center of the genome. It is not clear if both polymerase and RNase H activities are simultaneous. RNase H probably can proceed both in a polymerase-dependent (RNA cut into small fragments by the same RT performing DNA synthesis) and a polymerase-independent mode (cleavage of remaining RNA fragments by free RTs). Secondly, RT performs DNA-directed plus-strand DNA synthesis using the PPTs that have not been removed by RNase H as primers. PPTs and tRNA primers are then removed by RNase H. The 3' and 5' ssDNA PBS regions hybridize to form a circular dsDNA intermediate. Strand displacement synthesis by RT to the PBS and PPT ends produces a blunt ended, linear dsDNA copy of the viral genome that includes long terminal repeats (LTRs) at both ends.</text>
</comment>
<comment type="function">
    <molecule>Integrase</molecule>
    <text evidence="5">Catalyzes viral DNA integration into the host chromosome, by performing a series of DNA cutting and joining reactions. This enzyme activity takes place after virion entry into a cell and reverse transcription of the RNA genome in dsDNA. The first step in the integration process is 3' processing. This step requires a complex comprising the viral genome, matrix protein, Vpr and integrase. This complex is called the pre-integration complex (PIC). The integrase protein removes 2 nucleotides from each 3' end of the viral DNA, leaving recessed CA OH's at the 3' ends. In the second step, the PIC enters cell nucleus. This process is mediated through integrase and Vpr proteins, and allows the virus to infect a non dividing cell. This ability to enter the nucleus is specific of lentiviruses, other retroviruses cannot and rely on cell division to access cell chromosomes. In the third step, termed strand transfer, the integrase protein joins the previously processed 3' ends to the 5' ends of strands of target cellular DNA at the site of integration. The 5'-ends are produced by integrase-catalyzed staggered cuts, 5 bp apart. A Y-shaped, gapped, recombination intermediate results, with the 5'-ends of the viral DNA strands and the 3' ends of target DNA strands remaining unjoined, flanking a gap of 5 bp. The last step is viral DNA integration into host chromosome. This involves host DNA repair synthesis in which the 5 bp gaps between the unjoined strands are filled in and then ligated. Since this process occurs at both cuts flanking the HIV genome, a 5 bp duplication of host DNA is produced at the ends of HIV-1 integration. Alternatively, Integrase may catalyze the excision of viral DNA just after strand transfer, this is termed disintegration.</text>
</comment>
<comment type="catalytic activity">
    <reaction evidence="11">
        <text>Endopeptidase for which the P1 residue is preferably hydrophobic.</text>
        <dbReference type="EC" id="3.4.23.47"/>
    </reaction>
</comment>
<comment type="catalytic activity">
    <reaction evidence="1">
        <text>Endohydrolysis of RNA in RNA/DNA hybrids. Three different cleavage modes: 1. sequence-specific internal cleavage of RNA. Human immunodeficiency virus type 1 and Moloney murine leukemia virus enzymes prefer to cleave the RNA strand one nucleotide away from the RNA-DNA junction. 2. RNA 5'-end directed cleavage 13-19 nucleotides from the RNA end. 3. DNA 3'-end directed cleavage 15-20 nucleotides away from the primer terminus.</text>
        <dbReference type="EC" id="3.1.26.13"/>
    </reaction>
</comment>
<comment type="catalytic activity">
    <reaction evidence="1">
        <text>3'-end directed exonucleolytic cleavage of viral RNA-DNA hybrid.</text>
        <dbReference type="EC" id="3.1.13.2"/>
    </reaction>
</comment>
<comment type="catalytic activity">
    <reaction evidence="12">
        <text>DNA(n) + a 2'-deoxyribonucleoside 5'-triphosphate = DNA(n+1) + diphosphate</text>
        <dbReference type="Rhea" id="RHEA:22508"/>
        <dbReference type="Rhea" id="RHEA-COMP:17339"/>
        <dbReference type="Rhea" id="RHEA-COMP:17340"/>
        <dbReference type="ChEBI" id="CHEBI:33019"/>
        <dbReference type="ChEBI" id="CHEBI:61560"/>
        <dbReference type="ChEBI" id="CHEBI:173112"/>
        <dbReference type="EC" id="2.7.7.49"/>
    </reaction>
</comment>
<comment type="catalytic activity">
    <reaction evidence="12">
        <text>DNA(n) + a 2'-deoxyribonucleoside 5'-triphosphate = DNA(n+1) + diphosphate</text>
        <dbReference type="Rhea" id="RHEA:22508"/>
        <dbReference type="Rhea" id="RHEA-COMP:17339"/>
        <dbReference type="Rhea" id="RHEA-COMP:17340"/>
        <dbReference type="ChEBI" id="CHEBI:33019"/>
        <dbReference type="ChEBI" id="CHEBI:61560"/>
        <dbReference type="ChEBI" id="CHEBI:173112"/>
        <dbReference type="EC" id="2.7.7.7"/>
    </reaction>
</comment>
<comment type="cofactor">
    <cofactor evidence="1">
        <name>Mg(2+)</name>
        <dbReference type="ChEBI" id="CHEBI:18420"/>
    </cofactor>
    <text evidence="1">Binds 2 magnesium ions for reverse transcriptase polymerase activity.</text>
</comment>
<comment type="cofactor">
    <cofactor evidence="1">
        <name>Mg(2+)</name>
        <dbReference type="ChEBI" id="CHEBI:18420"/>
    </cofactor>
    <text evidence="1">Binds 2 magnesium ions for ribonuclease H (RNase H) activity. Substrate-binding is a precondition for magnesium binding.</text>
</comment>
<comment type="cofactor">
    <cofactor evidence="1">
        <name>Mg(2+)</name>
        <dbReference type="ChEBI" id="CHEBI:18420"/>
    </cofactor>
    <text evidence="1">Magnesium ions are required for integrase activity. Binds at least 1, maybe 2 magnesium ions.</text>
</comment>
<comment type="activity regulation">
    <text evidence="1">Protease: The viral protease is inhibited by many synthetic protease inhibitors (PIs), such as amprenavir, atazanavir, indinavir, loprinavir, nelfinavir, ritonavir and saquinavir. Use of protease inhibitors in tritherapy regimens permit more ambitious therapeutic strategies. Reverse transcriptase/ribonuclease H: RT can be inhibited either by nucleoside RT inhibitors (NRTIs) or by non nucleoside RT inhibitors (NNRTIs). NRTIs act as chain terminators, whereas NNRTIs inhibit DNA polymerization by binding a small hydrophobic pocket near the RT active site and inducing an allosteric change in this region. Classical NRTIs are abacavir, adefovir (PMEA), didanosine (ddI), lamivudine (3TC), stavudine (d4T), tenofovir (PMPA), zalcitabine (ddC), and zidovudine (AZT). Classical NNRTIs are atevirdine (BHAP U-87201E), delavirdine, efavirenz (DMP-266), emivirine (I-EBU), and nevirapine (BI-RG-587). The tritherapies used as a basic effective treatment of AIDS associate two NRTIs and one NNRTI.</text>
</comment>
<comment type="subunit">
    <molecule>Matrix protein p17</molecule>
    <text evidence="6 7">Homotrimer; further assembles as hexamers of trimers. Interacts with gp41 (via C-terminus). Interacts with host CALM1; this interaction induces a conformational change in the Matrix protein, triggering exposure of the myristate group. Interacts with host AP3D1; this interaction allows the polyprotein trafficking to multivesicular bodies during virus assembly. Part of the pre-integration complex (PIC) which is composed of viral genome, matrix protein, Vpr and integrase.</text>
</comment>
<comment type="subunit">
    <molecule>Capsid protein p24</molecule>
    <text evidence="2 6 7">Homodimer; the homodimer further multimerizes as homohexamers or homopentamers. Interacts with human PPIA/CYPA. Interacts with human NUP153. Interacts with host PDZD8; this interaction stabilizes the capsid. Interacts with monkey TRIM5; this interaction destabilizes the capsid.</text>
</comment>
<comment type="subunit">
    <molecule>Protease</molecule>
    <text evidence="5 8">Homodimer, whose active site consists of two apposed aspartic acid residues.</text>
</comment>
<comment type="subunit">
    <molecule>Reverse transcriptase/ribonuclease H</molecule>
    <text evidence="3">Heterodimer of p66 RT and p51 RT (RT p66/p51) (By similarity). Heterodimerization of RT is essential for DNA polymerase activity (By similarity). The overall folding of the subdomains is similar in p66 RT and p51 RT but the spatial arrangements of the subdomains are dramatically different (By similarity).</text>
</comment>
<comment type="subunit">
    <molecule>Integrase</molecule>
    <text evidence="4 5 8">Homotetramer; may further associate as a homohexadecamer (By similarity). Part of the pre-integration complex (PIC) which is composed of viral genome, matrix protein, Vpr and integrase. Interacts with human SMARCB1/INI1 and human PSIP1/LEDGF isoform 1. Interacts with human KPNA3; this interaction might play a role in nuclear import of the pre-integration complex (By similarity). Interacts with human NUP153; this interaction might play a role in nuclear import of the pre-integration complex (By similarity).</text>
</comment>
<comment type="subcellular location">
    <molecule>Gag-Pol polyprotein</molecule>
    <subcellularLocation>
        <location>Host cell membrane</location>
        <topology>Lipid-anchor</topology>
    </subcellularLocation>
    <subcellularLocation>
        <location>Host endosome</location>
        <location>Host multivesicular body</location>
    </subcellularLocation>
    <text evidence="8">These locations are linked to virus assembly sites. The main location is the cell membrane, but under some circumstances, late endosomal compartments can serve as productive sites for virion assembly.</text>
</comment>
<comment type="subcellular location">
    <molecule>Matrix protein p17</molecule>
    <subcellularLocation>
        <location>Virion membrane</location>
        <topology evidence="19">Lipid-anchor</topology>
    </subcellularLocation>
    <subcellularLocation>
        <location evidence="1">Host nucleus</location>
    </subcellularLocation>
    <subcellularLocation>
        <location evidence="1">Host cytoplasm</location>
    </subcellularLocation>
</comment>
<comment type="subcellular location">
    <molecule>Capsid protein p24</molecule>
    <subcellularLocation>
        <location evidence="19">Virion</location>
    </subcellularLocation>
</comment>
<comment type="subcellular location">
    <molecule>Nucleocapsid protein p7</molecule>
    <subcellularLocation>
        <location evidence="19">Virion</location>
    </subcellularLocation>
</comment>
<comment type="subcellular location">
    <molecule>Reverse transcriptase/ribonuclease H</molecule>
    <subcellularLocation>
        <location evidence="19">Virion</location>
    </subcellularLocation>
</comment>
<comment type="subcellular location">
    <molecule>Integrase</molecule>
    <subcellularLocation>
        <location evidence="19">Virion</location>
    </subcellularLocation>
    <subcellularLocation>
        <location evidence="19">Host nucleus</location>
    </subcellularLocation>
    <subcellularLocation>
        <location evidence="19">Host cytoplasm</location>
    </subcellularLocation>
    <text evidence="19">Nuclear at initial phase, cytoplasmic at assembly.</text>
</comment>
<comment type="alternative products">
    <event type="ribosomal frameshifting"/>
    <isoform>
        <id>P12451-1</id>
        <name>Gag-Pol polyprotein</name>
        <sequence type="displayed"/>
    </isoform>
    <isoform>
        <id>P12450-1</id>
        <name>Gag polyprotein</name>
        <sequence type="external"/>
    </isoform>
    <text>Translation results in the formation of the Gag polyprotein most of the time. Ribosomal frameshifting at the gag-pol genes boundary occurs at low frequency and produces the Gag-Pol polyprotein. This strategy of translation probably allows the virus to modulate the quantity of each viral protein. Maintenance of a correct Gag to Gag-Pol ratio is essential for RNA dimerization and viral infectivity.</text>
</comment>
<comment type="domain">
    <molecule>Reverse transcriptase/ribonuclease H</molecule>
    <text evidence="1">RT is structured in five subdomains: finger, palm, thumb, connection and RNase H. Within the palm subdomain, the 'primer grip' region is thought to be involved in the positioning of the primer terminus for accommodating the incoming nucleotide. The RNase H domain stabilizes the association of RT with primer-template.</text>
</comment>
<comment type="domain">
    <molecule>Reverse transcriptase/ribonuclease H</molecule>
    <text evidence="1">The tryptophan repeat motif is involved in RT p66/p51 dimerization (By similarity).</text>
</comment>
<comment type="domain">
    <molecule>Integrase</molecule>
    <text evidence="1">The core domain contains the D-x(n)-D-x(35)-E motif, named for the phylogenetically conserved glutamic acid and aspartic acid residues and the invariant 35 amino acid spacing between the second and third acidic residues. Each acidic residue of the D,D(35)E motif is independently essential for the 3'-processing and strand transfer activities of purified integrase protein.</text>
</comment>
<comment type="PTM">
    <molecule>Gag-Pol polyprotein</molecule>
    <text evidence="5 12">Specific enzymatic cleavages by the viral protease yield mature proteins. The protease is released by autocatalytic cleavage. The polyprotein is cleaved during and after budding, this process is termed maturation. Proteolytic cleavage of p66 RT removes the RNase H domain to yield the p51 RT subunit. Nucleocapsid protein p7 might be further cleaved after virus entry.</text>
</comment>
<comment type="miscellaneous">
    <molecule>Reverse transcriptase/ribonuclease H</molecule>
    <text evidence="1">Error-prone enzyme that lacks a proof-reading function. High mutations rate is a direct consequence of this characteristic. RT also displays frequent template switching leading to high recombination rate. Recombination mostly occurs between homologous regions of the two copackaged RNA genomes. If these two RNA molecules derive from different viral strains, reverse transcription will give rise to highly recombinated proviral DNAs.</text>
</comment>
<comment type="miscellaneous">
    <molecule>Isoform Gag-Pol polyprotein</molecule>
    <text>Produced by -1 ribosomal frameshifting.</text>
</comment>
<gene>
    <name type="primary">gag-pol</name>
</gene>
<feature type="initiator methionine" description="Removed; by host" evidence="1">
    <location>
        <position position="1"/>
    </location>
</feature>
<feature type="chain" id="PRO_0000261299" description="Gag-Pol polyprotein">
    <location>
        <begin position="2"/>
        <end position="1462"/>
    </location>
</feature>
<feature type="chain" id="PRO_0000042515" description="Matrix protein p17" evidence="1">
    <location>
        <begin position="2"/>
        <end position="135"/>
    </location>
</feature>
<feature type="chain" id="PRO_0000042516" description="Capsid protein p24" evidence="1">
    <location>
        <begin position="136"/>
        <end position="364"/>
    </location>
</feature>
<feature type="peptide" id="PRO_0000042517" description="Spacer peptide 1" evidence="1">
    <location>
        <begin position="365"/>
        <end position="381"/>
    </location>
</feature>
<feature type="chain" id="PRO_0000042519" description="Nucleocapsid protein p7" evidence="1">
    <location>
        <begin position="382"/>
        <end position="430"/>
    </location>
</feature>
<feature type="peptide" id="PRO_0000246748" description="Transframe peptide" evidence="9">
    <location>
        <begin position="431"/>
        <end position="444"/>
    </location>
</feature>
<feature type="chain" id="PRO_0000042521" description="p6-pol" evidence="9">
    <location>
        <begin position="445"/>
        <end position="511"/>
    </location>
</feature>
<feature type="chain" id="PRO_0000038672" description="Protease" evidence="1">
    <location>
        <begin position="512"/>
        <end position="610"/>
    </location>
</feature>
<feature type="chain" id="PRO_0000042522" description="Reverse transcriptase/ribonuclease H" evidence="1">
    <location>
        <begin position="611"/>
        <end position="1169"/>
    </location>
</feature>
<feature type="chain" id="PRO_0000042523" description="p51 RT" evidence="1">
    <location>
        <begin position="611"/>
        <end position="1049"/>
    </location>
</feature>
<feature type="chain" id="PRO_0000042524" description="p15" evidence="1">
    <location>
        <begin position="1050"/>
        <end position="1169"/>
    </location>
</feature>
<feature type="chain" id="PRO_0000042525" description="Integrase" evidence="1">
    <location>
        <begin position="1170"/>
        <end position="1462"/>
    </location>
</feature>
<feature type="domain" description="Peptidase A2" evidence="11">
    <location>
        <begin position="531"/>
        <end position="600"/>
    </location>
</feature>
<feature type="domain" description="Reverse transcriptase" evidence="12">
    <location>
        <begin position="654"/>
        <end position="844"/>
    </location>
</feature>
<feature type="domain" description="RNase H type-1" evidence="13">
    <location>
        <begin position="1043"/>
        <end position="1166"/>
    </location>
</feature>
<feature type="domain" description="Integrase catalytic" evidence="15">
    <location>
        <begin position="1222"/>
        <end position="1373"/>
    </location>
</feature>
<feature type="zinc finger region" description="CCHC-type 1" evidence="10">
    <location>
        <begin position="388"/>
        <end position="405"/>
    </location>
</feature>
<feature type="zinc finger region" description="CCHC-type 2" evidence="10">
    <location>
        <begin position="409"/>
        <end position="426"/>
    </location>
</feature>
<feature type="zinc finger region" description="Integrase-type" evidence="14">
    <location>
        <begin position="1172"/>
        <end position="1213"/>
    </location>
</feature>
<feature type="DNA-binding region" description="Integrase-type" evidence="16">
    <location>
        <begin position="1392"/>
        <end position="1439"/>
    </location>
</feature>
<feature type="region of interest" description="Interaction with Gp41" evidence="8">
    <location>
        <begin position="7"/>
        <end position="31"/>
    </location>
</feature>
<feature type="region of interest" description="Interaction with human PPIA/CYPA and NUP153" evidence="8">
    <location>
        <begin position="191"/>
        <end position="228"/>
    </location>
</feature>
<feature type="region of interest" description="Dimerization/Multimerization of capsid protein p24" evidence="5">
    <location>
        <begin position="279"/>
        <end position="364"/>
    </location>
</feature>
<feature type="region of interest" description="Disordered" evidence="18">
    <location>
        <begin position="441"/>
        <end position="507"/>
    </location>
</feature>
<feature type="region of interest" description="Dimerization of protease" evidence="5">
    <location>
        <begin position="512"/>
        <end position="516"/>
    </location>
</feature>
<feature type="region of interest" description="Dimerization of protease" evidence="5">
    <location>
        <begin position="560"/>
        <end position="566"/>
    </location>
</feature>
<feature type="region of interest" description="Dimerization of protease" evidence="5">
    <location>
        <begin position="599"/>
        <end position="611"/>
    </location>
</feature>
<feature type="region of interest" description="RT 'primer grip'" evidence="1">
    <location>
        <begin position="837"/>
        <end position="845"/>
    </location>
</feature>
<feature type="region of interest" description="Disordered" evidence="18">
    <location>
        <begin position="1443"/>
        <end position="1462"/>
    </location>
</feature>
<feature type="short sequence motif" description="Nuclear export signal" evidence="1">
    <location>
        <begin position="16"/>
        <end position="22"/>
    </location>
</feature>
<feature type="short sequence motif" description="Nuclear localization signal" evidence="1">
    <location>
        <begin position="26"/>
        <end position="32"/>
    </location>
</feature>
<feature type="short sequence motif" description="Tryptophan repeat motif" evidence="1">
    <location>
        <begin position="1007"/>
        <end position="1023"/>
    </location>
</feature>
<feature type="compositionally biased region" description="Low complexity" evidence="18">
    <location>
        <begin position="454"/>
        <end position="468"/>
    </location>
</feature>
<feature type="compositionally biased region" description="Basic and acidic residues" evidence="18">
    <location>
        <begin position="471"/>
        <end position="490"/>
    </location>
</feature>
<feature type="compositionally biased region" description="Basic and acidic residues" evidence="18">
    <location>
        <begin position="497"/>
        <end position="507"/>
    </location>
</feature>
<feature type="active site" description="For protease activity; shared with dimeric partner" evidence="17">
    <location>
        <position position="536"/>
    </location>
</feature>
<feature type="binding site" evidence="1">
    <location>
        <position position="720"/>
    </location>
    <ligand>
        <name>Mg(2+)</name>
        <dbReference type="ChEBI" id="CHEBI:18420"/>
        <label>1</label>
        <note>catalytic; for reverse transcriptase activity</note>
    </ligand>
</feature>
<feature type="binding site" evidence="1">
    <location>
        <position position="795"/>
    </location>
    <ligand>
        <name>Mg(2+)</name>
        <dbReference type="ChEBI" id="CHEBI:18420"/>
        <label>1</label>
        <note>catalytic; for reverse transcriptase activity</note>
    </ligand>
</feature>
<feature type="binding site" evidence="1">
    <location>
        <position position="796"/>
    </location>
    <ligand>
        <name>Mg(2+)</name>
        <dbReference type="ChEBI" id="CHEBI:18420"/>
        <label>1</label>
        <note>catalytic; for reverse transcriptase activity</note>
    </ligand>
</feature>
<feature type="binding site" evidence="1">
    <location>
        <position position="1052"/>
    </location>
    <ligand>
        <name>Mg(2+)</name>
        <dbReference type="ChEBI" id="CHEBI:18420"/>
        <label>2</label>
        <note>catalytic; for RNase H activity</note>
    </ligand>
</feature>
<feature type="binding site" evidence="1">
    <location>
        <position position="1087"/>
    </location>
    <ligand>
        <name>Mg(2+)</name>
        <dbReference type="ChEBI" id="CHEBI:18420"/>
        <label>2</label>
        <note>catalytic; for RNase H activity</note>
    </ligand>
</feature>
<feature type="binding site" evidence="1">
    <location>
        <position position="1107"/>
    </location>
    <ligand>
        <name>Mg(2+)</name>
        <dbReference type="ChEBI" id="CHEBI:18420"/>
        <label>2</label>
        <note>catalytic; for RNase H activity</note>
    </ligand>
</feature>
<feature type="binding site" evidence="1">
    <location>
        <position position="1158"/>
    </location>
    <ligand>
        <name>Mg(2+)</name>
        <dbReference type="ChEBI" id="CHEBI:18420"/>
        <label>2</label>
        <note>catalytic; for RNase H activity</note>
    </ligand>
</feature>
<feature type="binding site" evidence="14">
    <location>
        <position position="1181"/>
    </location>
    <ligand>
        <name>Zn(2+)</name>
        <dbReference type="ChEBI" id="CHEBI:29105"/>
    </ligand>
</feature>
<feature type="binding site" evidence="14">
    <location>
        <position position="1185"/>
    </location>
    <ligand>
        <name>Zn(2+)</name>
        <dbReference type="ChEBI" id="CHEBI:29105"/>
    </ligand>
</feature>
<feature type="binding site" evidence="14">
    <location>
        <position position="1209"/>
    </location>
    <ligand>
        <name>Zn(2+)</name>
        <dbReference type="ChEBI" id="CHEBI:29105"/>
    </ligand>
</feature>
<feature type="binding site" evidence="14">
    <location>
        <position position="1212"/>
    </location>
    <ligand>
        <name>Zn(2+)</name>
        <dbReference type="ChEBI" id="CHEBI:29105"/>
    </ligand>
</feature>
<feature type="binding site" evidence="1">
    <location>
        <position position="1233"/>
    </location>
    <ligand>
        <name>Mg(2+)</name>
        <dbReference type="ChEBI" id="CHEBI:18420"/>
        <label>3</label>
        <note>catalytic; for integrase activity</note>
    </ligand>
</feature>
<feature type="binding site" evidence="1">
    <location>
        <position position="1285"/>
    </location>
    <ligand>
        <name>Mg(2+)</name>
        <dbReference type="ChEBI" id="CHEBI:18420"/>
        <label>3</label>
        <note>catalytic; for integrase activity</note>
    </ligand>
</feature>
<feature type="binding site" evidence="5">
    <location>
        <position position="1321"/>
    </location>
    <ligand>
        <name>Mg(2+)</name>
        <dbReference type="ChEBI" id="CHEBI:18420"/>
        <label>3</label>
        <note>catalytic; for integrase activity</note>
    </ligand>
</feature>
<feature type="site" description="Cleavage; by viral protease" evidence="1">
    <location>
        <begin position="135"/>
        <end position="136"/>
    </location>
</feature>
<feature type="site" description="Cis/trans isomerization of proline peptide bond; by human PPIA/CYPA" evidence="1">
    <location>
        <begin position="222"/>
        <end position="223"/>
    </location>
</feature>
<feature type="site" description="Cleavage; by viral protease" evidence="1">
    <location>
        <begin position="364"/>
        <end position="365"/>
    </location>
</feature>
<feature type="site" description="Cleavage; by viral protease" evidence="1">
    <location>
        <begin position="381"/>
        <end position="382"/>
    </location>
</feature>
<feature type="site" description="Cleavage; by viral protease" evidence="9">
    <location>
        <begin position="430"/>
        <end position="431"/>
    </location>
</feature>
<feature type="site" description="Cleavage; by viral protease" evidence="1">
    <location>
        <begin position="444"/>
        <end position="445"/>
    </location>
</feature>
<feature type="site" description="Cleavage; by viral protease" evidence="1">
    <location>
        <begin position="511"/>
        <end position="512"/>
    </location>
</feature>
<feature type="site" description="Cleavage; by viral protease" evidence="1">
    <location>
        <begin position="610"/>
        <end position="611"/>
    </location>
</feature>
<feature type="site" description="Essential for RT p66/p51 heterodimerization" evidence="1">
    <location>
        <position position="1010"/>
    </location>
</feature>
<feature type="site" description="Essential for RT p66/p51 heterodimerization" evidence="1">
    <location>
        <position position="1023"/>
    </location>
</feature>
<feature type="site" description="Cleavage; by viral protease; partial" evidence="1">
    <location>
        <begin position="1049"/>
        <end position="1050"/>
    </location>
</feature>
<feature type="site" description="Cleavage; by viral protease" evidence="1">
    <location>
        <begin position="1169"/>
        <end position="1170"/>
    </location>
</feature>
<feature type="lipid moiety-binding region" description="N-myristoyl glycine; by host" evidence="1">
    <location>
        <position position="2"/>
    </location>
</feature>
<proteinExistence type="inferred from homology"/>
<organism>
    <name type="scientific">Human immunodeficiency virus type 2 subtype A (isolate SBLISY)</name>
    <name type="common">HIV-2</name>
    <dbReference type="NCBI Taxonomy" id="11718"/>
    <lineage>
        <taxon>Viruses</taxon>
        <taxon>Riboviria</taxon>
        <taxon>Pararnavirae</taxon>
        <taxon>Artverviricota</taxon>
        <taxon>Revtraviricetes</taxon>
        <taxon>Ortervirales</taxon>
        <taxon>Retroviridae</taxon>
        <taxon>Orthoretrovirinae</taxon>
        <taxon>Lentivirus</taxon>
        <taxon>Human immunodeficiency virus 2</taxon>
    </lineage>
</organism>
<sequence>MGAKNSVLRGKKADELEKIRLRPGGKKKYRLKHIVWAANELDRFGLTESLLESKEGCQKIISVLEPLVPTGSENLKSLYNTTCVIWCLHAEEKVKDTEEAKRIVGRHLVAETETAEKMPNISRPTAPPSGKGGNFPVQQIGGNYVHLPLSPRTLNAWVKLVEEKKFGAEVVPGFQALSEGCTPYDINQMLNCVGDHQAAMQIIREIINEEAADWDVQHPIPGPLPAGQLRDPRGSDIAGTTSTVEEQIEWMYRQENPVPVGNIYRRWIQIGLQKCVRMYNPTNILDIKQGPKESFQSYVDRFYKSLRAEQTDAAVKNWMTQTLLVQSNPDCKLVLKGLGMNPTLEEMLTACQGIGGPGQKARLMAEALKEAMRPAPIPFAAAQQKRAIKCWNCGKEGHSARQCRAPRRQGCWKCGKSGHIMANCPDRQAGFLRAWTMGKEAPQLPRGPKFAGANTNSTPNGSSSGPTGEVHAAREKTERAETKTIQRSDRGLAASRARRDTTQRDDRGLAAPQFSLWKRPVVTAYIEDQPVEVLLDTGADDSIVAGIELGSNYSPKIVGGIGGFINTKEYKDVEIRVLNKKVRATIMTGDTPINIFGRNILTALGMSLNLPVAKIEPVKVTLKPGKDGPKQRQWPLTREKIEALREICEKMEREGQLEEAPPTNPYNTPTFAIKKKDKNKWRMLIDFRELNKVTQDFTEVQLGIPHPAGLAKKRRITVLDVGDAYFSIPLYEDFRQYTAFTLPSVNNAEPGKRYIYKVLPQGWKGSPAIFQYTMRQVLEPFRKANPDVIIVQYMDDILIASDRTDLEHDKVVLQLKELLNGLGFSTPDEKFQKDPPYQWMGYELWPTKWKLQKIQLPQKEVWTVNDIQKLVGVLNWAAQIYPGIKTKHLCKLIRGKMTPTEEVQWTELAEAELEENKIILSQEQEGHYYQEEKELEATVQKDQDNQWTYKVHQGEKILKVGKYAKIKNTHTNGVRLLAQVVQKIGKEALVIWGRIPKFHLPVERETWEQWWDNYWQVTWIPDWDFVSTPPLVRLAFNLVKDPIPGAETFYTDGSCNRQSKEGKAGYITDRGKDKVRILEQTTNQQAELEAFAMAVTDSGPKVNIVVDSQYVMGIVTGQPAESESRIVNKIIEEMIKKEAIYVAWVPAHKGIGGNQEIDHLVSQGIRQVLFLERIEPAQEEHGKYHSNVKELAHKFGLPNLVARQIVNTCAQCQQKGEAIHGQVNAELGTWQMDCTHLEGKIIIVAVHVASGFIEAEVIPQESGRQTALFLLKLASRWPITHLHTDNGANFTSQEVKMVAWWVGIEQSFGVPYNPQSQGVVEAMNHHLKNQIERIREQANTMETIVLMAVHCMNFKRRGGIGDMTPVERLVNMITTEQEIQFLQAKNSKLKNFRVYFREGRNQLWQGPGELLWKGDGAVIVKVGTDIKVIPRRKAKIIRDYGPRQEMDSGSHLEGAREDGEMA</sequence>
<dbReference type="EC" id="3.4.23.47"/>
<dbReference type="EC" id="2.7.7.49"/>
<dbReference type="EC" id="2.7.7.7"/>
<dbReference type="EC" id="3.1.26.13"/>
<dbReference type="EC" id="3.1.13.2"/>
<dbReference type="EC" id="2.7.7.-" evidence="5"/>
<dbReference type="EC" id="3.1.-.-" evidence="5"/>
<dbReference type="EMBL" id="J04498">
    <property type="protein sequence ID" value="AAB00746.1"/>
    <property type="status" value="ALT_SEQ"/>
    <property type="molecule type" value="Genomic_DNA"/>
</dbReference>
<dbReference type="SMR" id="P12451"/>
<dbReference type="MEROPS" id="A02.002"/>
<dbReference type="PRO" id="PR:P12451"/>
<dbReference type="Proteomes" id="UP000007427">
    <property type="component" value="Segment"/>
</dbReference>
<dbReference type="GO" id="GO:0043657">
    <property type="term" value="C:host cell"/>
    <property type="evidence" value="ECO:0007669"/>
    <property type="project" value="GOC"/>
</dbReference>
<dbReference type="GO" id="GO:0042025">
    <property type="term" value="C:host cell nucleus"/>
    <property type="evidence" value="ECO:0007669"/>
    <property type="project" value="UniProtKB-SubCell"/>
</dbReference>
<dbReference type="GO" id="GO:0020002">
    <property type="term" value="C:host cell plasma membrane"/>
    <property type="evidence" value="ECO:0007669"/>
    <property type="project" value="UniProtKB-SubCell"/>
</dbReference>
<dbReference type="GO" id="GO:0072494">
    <property type="term" value="C:host multivesicular body"/>
    <property type="evidence" value="ECO:0007669"/>
    <property type="project" value="UniProtKB-SubCell"/>
</dbReference>
<dbReference type="GO" id="GO:0016020">
    <property type="term" value="C:membrane"/>
    <property type="evidence" value="ECO:0007669"/>
    <property type="project" value="UniProtKB-KW"/>
</dbReference>
<dbReference type="GO" id="GO:0019013">
    <property type="term" value="C:viral nucleocapsid"/>
    <property type="evidence" value="ECO:0007669"/>
    <property type="project" value="UniProtKB-KW"/>
</dbReference>
<dbReference type="GO" id="GO:0055036">
    <property type="term" value="C:virion membrane"/>
    <property type="evidence" value="ECO:0007669"/>
    <property type="project" value="UniProtKB-SubCell"/>
</dbReference>
<dbReference type="GO" id="GO:0004190">
    <property type="term" value="F:aspartic-type endopeptidase activity"/>
    <property type="evidence" value="ECO:0007669"/>
    <property type="project" value="UniProtKB-KW"/>
</dbReference>
<dbReference type="GO" id="GO:0003677">
    <property type="term" value="F:DNA binding"/>
    <property type="evidence" value="ECO:0007669"/>
    <property type="project" value="UniProtKB-KW"/>
</dbReference>
<dbReference type="GO" id="GO:0003887">
    <property type="term" value="F:DNA-directed DNA polymerase activity"/>
    <property type="evidence" value="ECO:0007669"/>
    <property type="project" value="UniProtKB-KW"/>
</dbReference>
<dbReference type="GO" id="GO:0004533">
    <property type="term" value="F:exoribonuclease H activity"/>
    <property type="evidence" value="ECO:0007669"/>
    <property type="project" value="UniProtKB-EC"/>
</dbReference>
<dbReference type="GO" id="GO:0008289">
    <property type="term" value="F:lipid binding"/>
    <property type="evidence" value="ECO:0007669"/>
    <property type="project" value="UniProtKB-KW"/>
</dbReference>
<dbReference type="GO" id="GO:0035613">
    <property type="term" value="F:RNA stem-loop binding"/>
    <property type="evidence" value="ECO:0007669"/>
    <property type="project" value="TreeGrafter"/>
</dbReference>
<dbReference type="GO" id="GO:0003964">
    <property type="term" value="F:RNA-directed DNA polymerase activity"/>
    <property type="evidence" value="ECO:0007669"/>
    <property type="project" value="UniProtKB-KW"/>
</dbReference>
<dbReference type="GO" id="GO:0004523">
    <property type="term" value="F:RNA-DNA hybrid ribonuclease activity"/>
    <property type="evidence" value="ECO:0007669"/>
    <property type="project" value="InterPro"/>
</dbReference>
<dbReference type="GO" id="GO:0005198">
    <property type="term" value="F:structural molecule activity"/>
    <property type="evidence" value="ECO:0007669"/>
    <property type="project" value="InterPro"/>
</dbReference>
<dbReference type="GO" id="GO:0008270">
    <property type="term" value="F:zinc ion binding"/>
    <property type="evidence" value="ECO:0007669"/>
    <property type="project" value="UniProtKB-KW"/>
</dbReference>
<dbReference type="GO" id="GO:0015074">
    <property type="term" value="P:DNA integration"/>
    <property type="evidence" value="ECO:0007669"/>
    <property type="project" value="UniProtKB-KW"/>
</dbReference>
<dbReference type="GO" id="GO:0006310">
    <property type="term" value="P:DNA recombination"/>
    <property type="evidence" value="ECO:0007669"/>
    <property type="project" value="UniProtKB-KW"/>
</dbReference>
<dbReference type="GO" id="GO:0075713">
    <property type="term" value="P:establishment of integrated proviral latency"/>
    <property type="evidence" value="ECO:0007669"/>
    <property type="project" value="UniProtKB-KW"/>
</dbReference>
<dbReference type="GO" id="GO:0006508">
    <property type="term" value="P:proteolysis"/>
    <property type="evidence" value="ECO:0007669"/>
    <property type="project" value="UniProtKB-KW"/>
</dbReference>
<dbReference type="GO" id="GO:0046718">
    <property type="term" value="P:symbiont entry into host cell"/>
    <property type="evidence" value="ECO:0007669"/>
    <property type="project" value="UniProtKB-KW"/>
</dbReference>
<dbReference type="GO" id="GO:0039657">
    <property type="term" value="P:symbiont-mediated suppression of host gene expression"/>
    <property type="evidence" value="ECO:0007669"/>
    <property type="project" value="UniProtKB-KW"/>
</dbReference>
<dbReference type="GO" id="GO:0044826">
    <property type="term" value="P:viral genome integration into host DNA"/>
    <property type="evidence" value="ECO:0007669"/>
    <property type="project" value="UniProtKB-KW"/>
</dbReference>
<dbReference type="GO" id="GO:0075732">
    <property type="term" value="P:viral penetration into host nucleus"/>
    <property type="evidence" value="ECO:0007669"/>
    <property type="project" value="UniProtKB-KW"/>
</dbReference>
<dbReference type="GO" id="GO:0075523">
    <property type="term" value="P:viral translational frameshifting"/>
    <property type="evidence" value="ECO:0007669"/>
    <property type="project" value="UniProtKB-KW"/>
</dbReference>
<dbReference type="CDD" id="cd05482">
    <property type="entry name" value="HIV_retropepsin_like"/>
    <property type="match status" value="1"/>
</dbReference>
<dbReference type="Gene3D" id="1.10.10.200">
    <property type="match status" value="1"/>
</dbReference>
<dbReference type="Gene3D" id="1.10.1200.30">
    <property type="match status" value="1"/>
</dbReference>
<dbReference type="Gene3D" id="3.30.70.270">
    <property type="match status" value="3"/>
</dbReference>
<dbReference type="Gene3D" id="2.40.70.10">
    <property type="entry name" value="Acid Proteases"/>
    <property type="match status" value="1"/>
</dbReference>
<dbReference type="Gene3D" id="3.10.10.10">
    <property type="entry name" value="HIV Type 1 Reverse Transcriptase, subunit A, domain 1"/>
    <property type="match status" value="1"/>
</dbReference>
<dbReference type="Gene3D" id="1.10.375.10">
    <property type="entry name" value="Human Immunodeficiency Virus Type 1 Capsid Protein"/>
    <property type="match status" value="1"/>
</dbReference>
<dbReference type="Gene3D" id="1.10.150.90">
    <property type="entry name" value="Immunodeficiency lentiviruses, gag gene matrix protein p17"/>
    <property type="match status" value="1"/>
</dbReference>
<dbReference type="Gene3D" id="2.30.30.10">
    <property type="entry name" value="Integrase, C-terminal domain superfamily, retroviral"/>
    <property type="match status" value="1"/>
</dbReference>
<dbReference type="Gene3D" id="3.30.420.10">
    <property type="entry name" value="Ribonuclease H-like superfamily/Ribonuclease H"/>
    <property type="match status" value="2"/>
</dbReference>
<dbReference type="Gene3D" id="1.20.5.760">
    <property type="entry name" value="Single helix bin"/>
    <property type="match status" value="1"/>
</dbReference>
<dbReference type="Gene3D" id="4.10.60.10">
    <property type="entry name" value="Zinc finger, CCHC-type"/>
    <property type="match status" value="1"/>
</dbReference>
<dbReference type="InterPro" id="IPR001969">
    <property type="entry name" value="Aspartic_peptidase_AS"/>
</dbReference>
<dbReference type="InterPro" id="IPR043502">
    <property type="entry name" value="DNA/RNA_pol_sf"/>
</dbReference>
<dbReference type="InterPro" id="IPR045345">
    <property type="entry name" value="Gag_p24_C"/>
</dbReference>
<dbReference type="InterPro" id="IPR017856">
    <property type="entry name" value="Integrase-like_N"/>
</dbReference>
<dbReference type="InterPro" id="IPR036862">
    <property type="entry name" value="Integrase_C_dom_sf_retrovir"/>
</dbReference>
<dbReference type="InterPro" id="IPR001037">
    <property type="entry name" value="Integrase_C_retrovir"/>
</dbReference>
<dbReference type="InterPro" id="IPR001584">
    <property type="entry name" value="Integrase_cat-core"/>
</dbReference>
<dbReference type="InterPro" id="IPR003308">
    <property type="entry name" value="Integrase_Zn-bd_dom_N"/>
</dbReference>
<dbReference type="InterPro" id="IPR000071">
    <property type="entry name" value="Lentvrl_matrix_N"/>
</dbReference>
<dbReference type="InterPro" id="IPR012344">
    <property type="entry name" value="Matrix_HIV/RSV_N"/>
</dbReference>
<dbReference type="InterPro" id="IPR001995">
    <property type="entry name" value="Peptidase_A2_cat"/>
</dbReference>
<dbReference type="InterPro" id="IPR021109">
    <property type="entry name" value="Peptidase_aspartic_dom_sf"/>
</dbReference>
<dbReference type="InterPro" id="IPR034170">
    <property type="entry name" value="Retropepsin-like_cat_dom"/>
</dbReference>
<dbReference type="InterPro" id="IPR018061">
    <property type="entry name" value="Retropepsins"/>
</dbReference>
<dbReference type="InterPro" id="IPR008916">
    <property type="entry name" value="Retrov_capsid_C"/>
</dbReference>
<dbReference type="InterPro" id="IPR008919">
    <property type="entry name" value="Retrov_capsid_N"/>
</dbReference>
<dbReference type="InterPro" id="IPR010999">
    <property type="entry name" value="Retrovr_matrix"/>
</dbReference>
<dbReference type="InterPro" id="IPR043128">
    <property type="entry name" value="Rev_trsase/Diguanyl_cyclase"/>
</dbReference>
<dbReference type="InterPro" id="IPR012337">
    <property type="entry name" value="RNaseH-like_sf"/>
</dbReference>
<dbReference type="InterPro" id="IPR002156">
    <property type="entry name" value="RNaseH_domain"/>
</dbReference>
<dbReference type="InterPro" id="IPR036397">
    <property type="entry name" value="RNaseH_sf"/>
</dbReference>
<dbReference type="InterPro" id="IPR000477">
    <property type="entry name" value="RT_dom"/>
</dbReference>
<dbReference type="InterPro" id="IPR010659">
    <property type="entry name" value="RVT_connect"/>
</dbReference>
<dbReference type="InterPro" id="IPR010661">
    <property type="entry name" value="RVT_thumb"/>
</dbReference>
<dbReference type="InterPro" id="IPR001878">
    <property type="entry name" value="Znf_CCHC"/>
</dbReference>
<dbReference type="InterPro" id="IPR036875">
    <property type="entry name" value="Znf_CCHC_sf"/>
</dbReference>
<dbReference type="PANTHER" id="PTHR41694">
    <property type="entry name" value="ENDOGENOUS RETROVIRUS GROUP K MEMBER POL PROTEIN"/>
    <property type="match status" value="1"/>
</dbReference>
<dbReference type="PANTHER" id="PTHR41694:SF3">
    <property type="entry name" value="RNA-DIRECTED DNA POLYMERASE-RELATED"/>
    <property type="match status" value="1"/>
</dbReference>
<dbReference type="Pfam" id="PF00540">
    <property type="entry name" value="Gag_p17"/>
    <property type="match status" value="1"/>
</dbReference>
<dbReference type="Pfam" id="PF00607">
    <property type="entry name" value="Gag_p24"/>
    <property type="match status" value="1"/>
</dbReference>
<dbReference type="Pfam" id="PF19317">
    <property type="entry name" value="Gag_p24_C"/>
    <property type="match status" value="1"/>
</dbReference>
<dbReference type="Pfam" id="PF00552">
    <property type="entry name" value="IN_DBD_C"/>
    <property type="match status" value="1"/>
</dbReference>
<dbReference type="Pfam" id="PF02022">
    <property type="entry name" value="Integrase_Zn"/>
    <property type="match status" value="1"/>
</dbReference>
<dbReference type="Pfam" id="PF00075">
    <property type="entry name" value="RNase_H"/>
    <property type="match status" value="1"/>
</dbReference>
<dbReference type="Pfam" id="PF00665">
    <property type="entry name" value="rve"/>
    <property type="match status" value="1"/>
</dbReference>
<dbReference type="Pfam" id="PF00077">
    <property type="entry name" value="RVP"/>
    <property type="match status" value="1"/>
</dbReference>
<dbReference type="Pfam" id="PF00078">
    <property type="entry name" value="RVT_1"/>
    <property type="match status" value="1"/>
</dbReference>
<dbReference type="Pfam" id="PF06815">
    <property type="entry name" value="RVT_connect"/>
    <property type="match status" value="1"/>
</dbReference>
<dbReference type="Pfam" id="PF06817">
    <property type="entry name" value="RVT_thumb"/>
    <property type="match status" value="1"/>
</dbReference>
<dbReference type="Pfam" id="PF00098">
    <property type="entry name" value="zf-CCHC"/>
    <property type="match status" value="2"/>
</dbReference>
<dbReference type="PRINTS" id="PR00234">
    <property type="entry name" value="HIV1MATRIX"/>
</dbReference>
<dbReference type="SMART" id="SM00343">
    <property type="entry name" value="ZnF_C2HC"/>
    <property type="match status" value="2"/>
</dbReference>
<dbReference type="SUPFAM" id="SSF50630">
    <property type="entry name" value="Acid proteases"/>
    <property type="match status" value="1"/>
</dbReference>
<dbReference type="SUPFAM" id="SSF50122">
    <property type="entry name" value="DNA-binding domain of retroviral integrase"/>
    <property type="match status" value="1"/>
</dbReference>
<dbReference type="SUPFAM" id="SSF56672">
    <property type="entry name" value="DNA/RNA polymerases"/>
    <property type="match status" value="1"/>
</dbReference>
<dbReference type="SUPFAM" id="SSF46919">
    <property type="entry name" value="N-terminal Zn binding domain of HIV integrase"/>
    <property type="match status" value="1"/>
</dbReference>
<dbReference type="SUPFAM" id="SSF47836">
    <property type="entry name" value="Retroviral matrix proteins"/>
    <property type="match status" value="1"/>
</dbReference>
<dbReference type="SUPFAM" id="SSF47353">
    <property type="entry name" value="Retrovirus capsid dimerization domain-like"/>
    <property type="match status" value="1"/>
</dbReference>
<dbReference type="SUPFAM" id="SSF47943">
    <property type="entry name" value="Retrovirus capsid protein, N-terminal core domain"/>
    <property type="match status" value="1"/>
</dbReference>
<dbReference type="SUPFAM" id="SSF57756">
    <property type="entry name" value="Retrovirus zinc finger-like domains"/>
    <property type="match status" value="1"/>
</dbReference>
<dbReference type="SUPFAM" id="SSF53098">
    <property type="entry name" value="Ribonuclease H-like"/>
    <property type="match status" value="2"/>
</dbReference>
<dbReference type="PROSITE" id="PS50175">
    <property type="entry name" value="ASP_PROT_RETROV"/>
    <property type="match status" value="1"/>
</dbReference>
<dbReference type="PROSITE" id="PS00141">
    <property type="entry name" value="ASP_PROTEASE"/>
    <property type="match status" value="1"/>
</dbReference>
<dbReference type="PROSITE" id="PS50994">
    <property type="entry name" value="INTEGRASE"/>
    <property type="match status" value="1"/>
</dbReference>
<dbReference type="PROSITE" id="PS51027">
    <property type="entry name" value="INTEGRASE_DBD"/>
    <property type="match status" value="1"/>
</dbReference>
<dbReference type="PROSITE" id="PS50879">
    <property type="entry name" value="RNASE_H_1"/>
    <property type="match status" value="1"/>
</dbReference>
<dbReference type="PROSITE" id="PS50878">
    <property type="entry name" value="RT_POL"/>
    <property type="match status" value="1"/>
</dbReference>
<dbReference type="PROSITE" id="PS50158">
    <property type="entry name" value="ZF_CCHC"/>
    <property type="match status" value="2"/>
</dbReference>
<dbReference type="PROSITE" id="PS50876">
    <property type="entry name" value="ZF_INTEGRASE"/>
    <property type="match status" value="1"/>
</dbReference>
<keyword id="KW-0014">AIDS</keyword>
<keyword id="KW-0064">Aspartyl protease</keyword>
<keyword id="KW-0167">Capsid protein</keyword>
<keyword id="KW-0229">DNA integration</keyword>
<keyword id="KW-0233">DNA recombination</keyword>
<keyword id="KW-0238">DNA-binding</keyword>
<keyword id="KW-0239">DNA-directed DNA polymerase</keyword>
<keyword id="KW-0255">Endonuclease</keyword>
<keyword id="KW-1262">Eukaryotic host gene expression shutoff by virus</keyword>
<keyword id="KW-1193">Eukaryotic host translation shutoff by virus</keyword>
<keyword id="KW-1032">Host cell membrane</keyword>
<keyword id="KW-1035">Host cytoplasm</keyword>
<keyword id="KW-1039">Host endosome</keyword>
<keyword id="KW-1190">Host gene expression shutoff by virus</keyword>
<keyword id="KW-1043">Host membrane</keyword>
<keyword id="KW-1048">Host nucleus</keyword>
<keyword id="KW-0945">Host-virus interaction</keyword>
<keyword id="KW-0378">Hydrolase</keyword>
<keyword id="KW-0446">Lipid-binding</keyword>
<keyword id="KW-0449">Lipoprotein</keyword>
<keyword id="KW-0460">Magnesium</keyword>
<keyword id="KW-0472">Membrane</keyword>
<keyword id="KW-0479">Metal-binding</keyword>
<keyword id="KW-0511">Multifunctional enzyme</keyword>
<keyword id="KW-0519">Myristate</keyword>
<keyword id="KW-0540">Nuclease</keyword>
<keyword id="KW-0548">Nucleotidyltransferase</keyword>
<keyword id="KW-0645">Protease</keyword>
<keyword id="KW-0677">Repeat</keyword>
<keyword id="KW-0688">Ribosomal frameshifting</keyword>
<keyword id="KW-0694">RNA-binding</keyword>
<keyword id="KW-0695">RNA-directed DNA polymerase</keyword>
<keyword id="KW-0808">Transferase</keyword>
<keyword id="KW-1179">Viral genome integration</keyword>
<keyword id="KW-0543">Viral nucleoprotein</keyword>
<keyword id="KW-1163">Viral penetration into host nucleus</keyword>
<keyword id="KW-1188">Viral release from host cell</keyword>
<keyword id="KW-0946">Virion</keyword>
<keyword id="KW-0917">Virion maturation</keyword>
<keyword id="KW-1160">Virus entry into host cell</keyword>
<keyword id="KW-0862">Zinc</keyword>
<keyword id="KW-0863">Zinc-finger</keyword>
<protein>
    <recommendedName>
        <fullName>Gag-Pol polyprotein</fullName>
    </recommendedName>
    <alternativeName>
        <fullName>Pr160Gag-Pol</fullName>
    </alternativeName>
    <component>
        <recommendedName>
            <fullName>Matrix protein p17</fullName>
            <shortName>MA</shortName>
        </recommendedName>
    </component>
    <component>
        <recommendedName>
            <fullName>Capsid protein p24</fullName>
            <shortName>CA</shortName>
        </recommendedName>
    </component>
    <component>
        <recommendedName>
            <fullName evidence="8">Spacer peptide 1</fullName>
            <shortName>SP1</shortName>
        </recommendedName>
        <alternativeName>
            <fullName>p2</fullName>
        </alternativeName>
    </component>
    <component>
        <recommendedName>
            <fullName>Nucleocapsid protein p7</fullName>
            <shortName>NC</shortName>
        </recommendedName>
    </component>
    <component>
        <recommendedName>
            <fullName>Transframe peptide</fullName>
            <shortName>TF</shortName>
        </recommendedName>
    </component>
    <component>
        <recommendedName>
            <fullName>p6-pol</fullName>
            <shortName>p6*</shortName>
        </recommendedName>
    </component>
    <component>
        <recommendedName>
            <fullName>Protease</fullName>
            <ecNumber>3.4.23.47</ecNumber>
        </recommendedName>
        <alternativeName>
            <fullName>PR</fullName>
        </alternativeName>
        <alternativeName>
            <fullName>Retropepsin</fullName>
        </alternativeName>
    </component>
    <component>
        <recommendedName>
            <fullName>Reverse transcriptase/ribonuclease H</fullName>
            <ecNumber>2.7.7.49</ecNumber>
            <ecNumber>2.7.7.7</ecNumber>
            <ecNumber>3.1.26.13</ecNumber>
        </recommendedName>
        <alternativeName>
            <fullName>Exoribonuclease H</fullName>
            <ecNumber>3.1.13.2</ecNumber>
        </alternativeName>
        <alternativeName>
            <fullName>p66 RT</fullName>
        </alternativeName>
    </component>
    <component>
        <recommendedName>
            <fullName>p51 RT</fullName>
        </recommendedName>
    </component>
    <component>
        <recommendedName>
            <fullName>p15</fullName>
        </recommendedName>
    </component>
    <component>
        <recommendedName>
            <fullName>Integrase</fullName>
            <shortName>IN</shortName>
            <ecNumber evidence="5">2.7.7.-</ecNumber>
            <ecNumber evidence="5">3.1.-.-</ecNumber>
        </recommendedName>
    </component>
</protein>
<name>POL_HV2SB</name>
<organismHost>
    <name type="scientific">Homo sapiens</name>
    <name type="common">Human</name>
    <dbReference type="NCBI Taxonomy" id="9606"/>
</organismHost>
<evidence type="ECO:0000250" key="1"/>
<evidence type="ECO:0000250" key="2">
    <source>
        <dbReference type="UniProtKB" id="P03348"/>
    </source>
</evidence>
<evidence type="ECO:0000250" key="3">
    <source>
        <dbReference type="UniProtKB" id="P03366"/>
    </source>
</evidence>
<evidence type="ECO:0000250" key="4">
    <source>
        <dbReference type="UniProtKB" id="P03367"/>
    </source>
</evidence>
<evidence type="ECO:0000250" key="5">
    <source>
        <dbReference type="UniProtKB" id="P04585"/>
    </source>
</evidence>
<evidence type="ECO:0000250" key="6">
    <source>
        <dbReference type="UniProtKB" id="P04591"/>
    </source>
</evidence>
<evidence type="ECO:0000250" key="7">
    <source>
        <dbReference type="UniProtKB" id="P12493"/>
    </source>
</evidence>
<evidence type="ECO:0000250" key="8">
    <source>
        <dbReference type="UniProtKB" id="P12497"/>
    </source>
</evidence>
<evidence type="ECO:0000255" key="9"/>
<evidence type="ECO:0000255" key="10">
    <source>
        <dbReference type="PROSITE-ProRule" id="PRU00047"/>
    </source>
</evidence>
<evidence type="ECO:0000255" key="11">
    <source>
        <dbReference type="PROSITE-ProRule" id="PRU00275"/>
    </source>
</evidence>
<evidence type="ECO:0000255" key="12">
    <source>
        <dbReference type="PROSITE-ProRule" id="PRU00405"/>
    </source>
</evidence>
<evidence type="ECO:0000255" key="13">
    <source>
        <dbReference type="PROSITE-ProRule" id="PRU00408"/>
    </source>
</evidence>
<evidence type="ECO:0000255" key="14">
    <source>
        <dbReference type="PROSITE-ProRule" id="PRU00450"/>
    </source>
</evidence>
<evidence type="ECO:0000255" key="15">
    <source>
        <dbReference type="PROSITE-ProRule" id="PRU00457"/>
    </source>
</evidence>
<evidence type="ECO:0000255" key="16">
    <source>
        <dbReference type="PROSITE-ProRule" id="PRU00506"/>
    </source>
</evidence>
<evidence type="ECO:0000255" key="17">
    <source>
        <dbReference type="PROSITE-ProRule" id="PRU10094"/>
    </source>
</evidence>
<evidence type="ECO:0000256" key="18">
    <source>
        <dbReference type="SAM" id="MobiDB-lite"/>
    </source>
</evidence>
<evidence type="ECO:0000305" key="19"/>
<reference key="1">
    <citation type="journal article" date="1989" name="Proc. Natl. Acad. Sci. U.S.A.">
        <title>Molecular and biological characterization of a replication competent human immunodeficiency type 2 (HIV-2) proviral clone.</title>
        <authorList>
            <person name="Franchini G."/>
            <person name="Fargnoli K.A."/>
            <person name="Giombini F."/>
            <person name="Jagodzinski L.L."/>
            <person name="de Rossi A."/>
            <person name="Bosch M."/>
            <person name="Biberfeld G."/>
            <person name="Fenyo A.M."/>
            <person name="Albert J."/>
            <person name="Gallo R.C."/>
            <person name="Wong-Staal F."/>
        </authorList>
    </citation>
    <scope>NUCLEOTIDE SEQUENCE [GENOMIC DNA]</scope>
</reference>
<reference key="2">
    <citation type="journal article" date="1996" name="Curr. Top. Microbiol. Immunol.">
        <title>Proteolytic processing and particle maturation.</title>
        <authorList>
            <person name="Vogt V.M."/>
        </authorList>
    </citation>
    <scope>REVIEW</scope>
</reference>
<reference key="3">
    <citation type="journal article" date="1999" name="J. Mol. Biol.">
        <title>Structural biology of HIV.</title>
        <authorList>
            <person name="Turner B.G."/>
            <person name="Summers M.F."/>
        </authorList>
    </citation>
    <scope>REVIEW</scope>
</reference>
<reference key="4">
    <citation type="journal article" date="2001" name="Annu. Rev. Genet.">
        <title>Mechanisms of retroviral recombination.</title>
        <authorList>
            <person name="Negroni M."/>
            <person name="Buc H."/>
        </authorList>
    </citation>
    <scope>REVIEW</scope>
</reference>
<reference key="5">
    <citation type="journal article" date="2002" name="Genome Biol.">
        <title>Retroviral proteases.</title>
        <authorList>
            <person name="Dunn B.M."/>
            <person name="Goodenow M.M."/>
            <person name="Gustchina A."/>
            <person name="Wlodawer A."/>
        </authorList>
    </citation>
    <scope>REVIEW</scope>
</reference>
<accession>P12451</accession>
<accession>Q85570</accession>